<protein>
    <recommendedName>
        <fullName evidence="1">Chaperonin GroEL</fullName>
        <ecNumber evidence="1">5.6.1.7</ecNumber>
    </recommendedName>
    <alternativeName>
        <fullName evidence="1">60 kDa chaperonin</fullName>
    </alternativeName>
    <alternativeName>
        <fullName evidence="1">Chaperonin-60</fullName>
        <shortName evidence="1">Cpn60</shortName>
    </alternativeName>
</protein>
<name>CH60_RICBR</name>
<evidence type="ECO:0000255" key="1">
    <source>
        <dbReference type="HAMAP-Rule" id="MF_00600"/>
    </source>
</evidence>
<sequence length="550" mass="58947">MATKLIKHGSKAREQMLEGIDILADAVKVTLGPKGRNVLIEQSFGAPKITKDGVTVAKSIELKDKIRNAGAQLLKSAATKAAEVAGDGTTTATVLARALAREGNKLVAAGYNPMDLKRGMDLAVNTVLEEVKKASKKIDSQEEIAQVGTISSNGDKEIGEKIAKAMEEVGKEGVITVEEAKNFSFDVEVVKGMMFDRGYLSPYFVTNSEKMVAELENPYILLFEKKLSNLQPMLPILEAVVQSQRPLLIIAEDVEGEALATLVVNRLRGGLKVAAVKAPGFGDRRKAMMEDIAILTNGELITEDLGMKLENVSLKSLGHAKRVTISKENTVIVDGSGDKKNIEERVLQIKSHIAETTSDYDKEKLQERLAKLSGGVAVLKVGGATEVEVKERKDRVEDALAATRAAVEEGVVAGGGVTLLHASQALKNLKVDNKDQQAGIELVIEALKDPIKQIVENAGENGGVVVGKLLEHKDKNFGFNAQDMQYVDMIKAGIIDPAKVVRTALQDAASVASLIITTETLIVDEPEDKENPMPMRGGMGGMGGMGGMDF</sequence>
<feature type="chain" id="PRO_0000256976" description="Chaperonin GroEL">
    <location>
        <begin position="1"/>
        <end position="550"/>
    </location>
</feature>
<feature type="binding site" evidence="1">
    <location>
        <begin position="30"/>
        <end position="33"/>
    </location>
    <ligand>
        <name>ATP</name>
        <dbReference type="ChEBI" id="CHEBI:30616"/>
    </ligand>
</feature>
<feature type="binding site" evidence="1">
    <location>
        <position position="51"/>
    </location>
    <ligand>
        <name>ATP</name>
        <dbReference type="ChEBI" id="CHEBI:30616"/>
    </ligand>
</feature>
<feature type="binding site" evidence="1">
    <location>
        <begin position="87"/>
        <end position="91"/>
    </location>
    <ligand>
        <name>ATP</name>
        <dbReference type="ChEBI" id="CHEBI:30616"/>
    </ligand>
</feature>
<feature type="binding site" evidence="1">
    <location>
        <position position="415"/>
    </location>
    <ligand>
        <name>ATP</name>
        <dbReference type="ChEBI" id="CHEBI:30616"/>
    </ligand>
</feature>
<feature type="binding site" evidence="1">
    <location>
        <position position="496"/>
    </location>
    <ligand>
        <name>ATP</name>
        <dbReference type="ChEBI" id="CHEBI:30616"/>
    </ligand>
</feature>
<accession>Q1RIZ3</accession>
<dbReference type="EC" id="5.6.1.7" evidence="1"/>
<dbReference type="EMBL" id="CP000087">
    <property type="protein sequence ID" value="ABE04671.1"/>
    <property type="molecule type" value="Genomic_DNA"/>
</dbReference>
<dbReference type="RefSeq" id="WP_011477259.1">
    <property type="nucleotide sequence ID" value="NC_007940.1"/>
</dbReference>
<dbReference type="SMR" id="Q1RIZ3"/>
<dbReference type="KEGG" id="rbe:RBE_0590"/>
<dbReference type="eggNOG" id="COG0459">
    <property type="taxonomic scope" value="Bacteria"/>
</dbReference>
<dbReference type="HOGENOM" id="CLU_016503_3_0_5"/>
<dbReference type="OrthoDB" id="9766614at2"/>
<dbReference type="Proteomes" id="UP000001951">
    <property type="component" value="Chromosome"/>
</dbReference>
<dbReference type="GO" id="GO:0005737">
    <property type="term" value="C:cytoplasm"/>
    <property type="evidence" value="ECO:0007669"/>
    <property type="project" value="UniProtKB-SubCell"/>
</dbReference>
<dbReference type="GO" id="GO:0005524">
    <property type="term" value="F:ATP binding"/>
    <property type="evidence" value="ECO:0007669"/>
    <property type="project" value="UniProtKB-UniRule"/>
</dbReference>
<dbReference type="GO" id="GO:0140662">
    <property type="term" value="F:ATP-dependent protein folding chaperone"/>
    <property type="evidence" value="ECO:0007669"/>
    <property type="project" value="InterPro"/>
</dbReference>
<dbReference type="GO" id="GO:0016853">
    <property type="term" value="F:isomerase activity"/>
    <property type="evidence" value="ECO:0007669"/>
    <property type="project" value="UniProtKB-KW"/>
</dbReference>
<dbReference type="GO" id="GO:0051082">
    <property type="term" value="F:unfolded protein binding"/>
    <property type="evidence" value="ECO:0007669"/>
    <property type="project" value="UniProtKB-UniRule"/>
</dbReference>
<dbReference type="GO" id="GO:0042026">
    <property type="term" value="P:protein refolding"/>
    <property type="evidence" value="ECO:0007669"/>
    <property type="project" value="UniProtKB-UniRule"/>
</dbReference>
<dbReference type="CDD" id="cd03344">
    <property type="entry name" value="GroEL"/>
    <property type="match status" value="1"/>
</dbReference>
<dbReference type="FunFam" id="3.50.7.10:FF:000001">
    <property type="entry name" value="60 kDa chaperonin"/>
    <property type="match status" value="1"/>
</dbReference>
<dbReference type="Gene3D" id="3.50.7.10">
    <property type="entry name" value="GroEL"/>
    <property type="match status" value="1"/>
</dbReference>
<dbReference type="Gene3D" id="1.10.560.10">
    <property type="entry name" value="GroEL-like equatorial domain"/>
    <property type="match status" value="1"/>
</dbReference>
<dbReference type="Gene3D" id="3.30.260.10">
    <property type="entry name" value="TCP-1-like chaperonin intermediate domain"/>
    <property type="match status" value="1"/>
</dbReference>
<dbReference type="HAMAP" id="MF_00600">
    <property type="entry name" value="CH60"/>
    <property type="match status" value="1"/>
</dbReference>
<dbReference type="InterPro" id="IPR018370">
    <property type="entry name" value="Chaperonin_Cpn60_CS"/>
</dbReference>
<dbReference type="InterPro" id="IPR001844">
    <property type="entry name" value="Cpn60/GroEL"/>
</dbReference>
<dbReference type="InterPro" id="IPR002423">
    <property type="entry name" value="Cpn60/GroEL/TCP-1"/>
</dbReference>
<dbReference type="InterPro" id="IPR027409">
    <property type="entry name" value="GroEL-like_apical_dom_sf"/>
</dbReference>
<dbReference type="InterPro" id="IPR027413">
    <property type="entry name" value="GROEL-like_equatorial_sf"/>
</dbReference>
<dbReference type="InterPro" id="IPR027410">
    <property type="entry name" value="TCP-1-like_intermed_sf"/>
</dbReference>
<dbReference type="NCBIfam" id="TIGR02348">
    <property type="entry name" value="GroEL"/>
    <property type="match status" value="1"/>
</dbReference>
<dbReference type="NCBIfam" id="NF000592">
    <property type="entry name" value="PRK00013.1"/>
    <property type="match status" value="1"/>
</dbReference>
<dbReference type="NCBIfam" id="NF009487">
    <property type="entry name" value="PRK12849.1"/>
    <property type="match status" value="1"/>
</dbReference>
<dbReference type="NCBIfam" id="NF009488">
    <property type="entry name" value="PRK12850.1"/>
    <property type="match status" value="1"/>
</dbReference>
<dbReference type="NCBIfam" id="NF009489">
    <property type="entry name" value="PRK12851.1"/>
    <property type="match status" value="1"/>
</dbReference>
<dbReference type="PANTHER" id="PTHR45633">
    <property type="entry name" value="60 KDA HEAT SHOCK PROTEIN, MITOCHONDRIAL"/>
    <property type="match status" value="1"/>
</dbReference>
<dbReference type="Pfam" id="PF00118">
    <property type="entry name" value="Cpn60_TCP1"/>
    <property type="match status" value="1"/>
</dbReference>
<dbReference type="PRINTS" id="PR00298">
    <property type="entry name" value="CHAPERONIN60"/>
</dbReference>
<dbReference type="SUPFAM" id="SSF52029">
    <property type="entry name" value="GroEL apical domain-like"/>
    <property type="match status" value="1"/>
</dbReference>
<dbReference type="SUPFAM" id="SSF48592">
    <property type="entry name" value="GroEL equatorial domain-like"/>
    <property type="match status" value="1"/>
</dbReference>
<dbReference type="SUPFAM" id="SSF54849">
    <property type="entry name" value="GroEL-intermediate domain like"/>
    <property type="match status" value="1"/>
</dbReference>
<dbReference type="PROSITE" id="PS00296">
    <property type="entry name" value="CHAPERONINS_CPN60"/>
    <property type="match status" value="1"/>
</dbReference>
<keyword id="KW-0067">ATP-binding</keyword>
<keyword id="KW-0143">Chaperone</keyword>
<keyword id="KW-0963">Cytoplasm</keyword>
<keyword id="KW-0413">Isomerase</keyword>
<keyword id="KW-0547">Nucleotide-binding</keyword>
<comment type="function">
    <text evidence="1">Together with its co-chaperonin GroES, plays an essential role in assisting protein folding. The GroEL-GroES system forms a nano-cage that allows encapsulation of the non-native substrate proteins and provides a physical environment optimized to promote and accelerate protein folding.</text>
</comment>
<comment type="catalytic activity">
    <reaction evidence="1">
        <text>ATP + H2O + a folded polypeptide = ADP + phosphate + an unfolded polypeptide.</text>
        <dbReference type="EC" id="5.6.1.7"/>
    </reaction>
</comment>
<comment type="subunit">
    <text evidence="1">Forms a cylinder of 14 subunits composed of two heptameric rings stacked back-to-back. Interacts with the co-chaperonin GroES.</text>
</comment>
<comment type="subcellular location">
    <subcellularLocation>
        <location evidence="1">Cytoplasm</location>
    </subcellularLocation>
</comment>
<comment type="similarity">
    <text evidence="1">Belongs to the chaperonin (HSP60) family.</text>
</comment>
<organism>
    <name type="scientific">Rickettsia bellii (strain RML369-C)</name>
    <dbReference type="NCBI Taxonomy" id="336407"/>
    <lineage>
        <taxon>Bacteria</taxon>
        <taxon>Pseudomonadati</taxon>
        <taxon>Pseudomonadota</taxon>
        <taxon>Alphaproteobacteria</taxon>
        <taxon>Rickettsiales</taxon>
        <taxon>Rickettsiaceae</taxon>
        <taxon>Rickettsieae</taxon>
        <taxon>Rickettsia</taxon>
        <taxon>belli group</taxon>
    </lineage>
</organism>
<gene>
    <name evidence="1" type="primary">groEL</name>
    <name evidence="1" type="synonym">groL</name>
    <name type="ordered locus">RBE_0590</name>
</gene>
<proteinExistence type="inferred from homology"/>
<reference key="1">
    <citation type="journal article" date="2006" name="PLoS Genet.">
        <title>Genome sequence of Rickettsia bellii illuminates the role of amoebae in gene exchanges between intracellular pathogens.</title>
        <authorList>
            <person name="Ogata H."/>
            <person name="La Scola B."/>
            <person name="Audic S."/>
            <person name="Renesto P."/>
            <person name="Blanc G."/>
            <person name="Robert C."/>
            <person name="Fournier P.-E."/>
            <person name="Claverie J.-M."/>
            <person name="Raoult D."/>
        </authorList>
    </citation>
    <scope>NUCLEOTIDE SEQUENCE [LARGE SCALE GENOMIC DNA]</scope>
    <source>
        <strain>RML369-C</strain>
    </source>
</reference>